<feature type="chain" id="PRO_0000329907" description="Polyribonucleotide nucleotidyltransferase">
    <location>
        <begin position="1"/>
        <end position="703"/>
    </location>
</feature>
<feature type="domain" description="KH" evidence="1">
    <location>
        <begin position="551"/>
        <end position="610"/>
    </location>
</feature>
<feature type="domain" description="S1 motif" evidence="1">
    <location>
        <begin position="620"/>
        <end position="694"/>
    </location>
</feature>
<feature type="binding site" evidence="1">
    <location>
        <position position="484"/>
    </location>
    <ligand>
        <name>Mg(2+)</name>
        <dbReference type="ChEBI" id="CHEBI:18420"/>
    </ligand>
</feature>
<feature type="binding site" evidence="1">
    <location>
        <position position="490"/>
    </location>
    <ligand>
        <name>Mg(2+)</name>
        <dbReference type="ChEBI" id="CHEBI:18420"/>
    </ligand>
</feature>
<name>PNP_SYNWW</name>
<keyword id="KW-0963">Cytoplasm</keyword>
<keyword id="KW-0460">Magnesium</keyword>
<keyword id="KW-0479">Metal-binding</keyword>
<keyword id="KW-0548">Nucleotidyltransferase</keyword>
<keyword id="KW-1185">Reference proteome</keyword>
<keyword id="KW-0694">RNA-binding</keyword>
<keyword id="KW-0808">Transferase</keyword>
<organism>
    <name type="scientific">Syntrophomonas wolfei subsp. wolfei (strain DSM 2245B / Goettingen)</name>
    <dbReference type="NCBI Taxonomy" id="335541"/>
    <lineage>
        <taxon>Bacteria</taxon>
        <taxon>Bacillati</taxon>
        <taxon>Bacillota</taxon>
        <taxon>Clostridia</taxon>
        <taxon>Eubacteriales</taxon>
        <taxon>Syntrophomonadaceae</taxon>
        <taxon>Syntrophomonas</taxon>
    </lineage>
</organism>
<gene>
    <name evidence="1" type="primary">pnp</name>
    <name type="ordered locus">Swol_0906</name>
</gene>
<protein>
    <recommendedName>
        <fullName evidence="1">Polyribonucleotide nucleotidyltransferase</fullName>
        <ecNumber evidence="1">2.7.7.8</ecNumber>
    </recommendedName>
    <alternativeName>
        <fullName evidence="1">Polynucleotide phosphorylase</fullName>
        <shortName evidence="1">PNPase</shortName>
    </alternativeName>
</protein>
<evidence type="ECO:0000255" key="1">
    <source>
        <dbReference type="HAMAP-Rule" id="MF_01595"/>
    </source>
</evidence>
<sequence>MIVKKYQMEVAGRPLIVEIGQVAQQANGAALMRYGDTVVLVTATAAKQPREGIDFFPLTVDYEEKQYAVGKIPGGFIKREGRATAQATLSARLIDRPIRPLFPKGFRNEIHVVATILSVEKDNAPDVTAITGASVALSISDIPFAGPVAAVIVGLVDGELIINPTVEQHQKSDLHLAVAGTKEAIMMVEGGANEVPEETMRDAIFFAHEEIKKIVDFQENIIREVGLSKMQVEIPILDEEIKKAVVEFATPLFEEAVKNPDKKTREDQMDSSQKSVLQHFTESYPEEEKLIADVSDETMKAVVRKMALEEGERVDGRKLDEIRKVSCEVGFLPRPHGSGLFTRGQTQVLSVTTLGAISEEQRLDGLGIEEKKRYIHHYNFPPYSTGETKPMRGPGRREIGHGALAERALLAVIPSEEEFPYTIRVVSEVLESNGSSSMGSVCGSTLSLMHAGVPIKAPVSGIAMGLVKEGERFAIMSDIQGIEDALGDMDFKLAGTEKGVTALQMDIKITGVNREIVEAALKQAREGRMFILKKMLEAIDKPNEELSPYAPQMIRMQIDPDKIREVIGPGGKTIHKIVDETGCKIDIEDDGSLFIMATDEEAAKKARFFVESIVAEVEVGKTYMGTVKRIMDFGAFVEIIPGVLGTSGKEGLVHISQLAEERVNKVRDVVDIGDQILVKVTEIDRQGRVNLSRKAVLKSAVKK</sequence>
<accession>Q0AYI2</accession>
<comment type="function">
    <text evidence="1">Involved in mRNA degradation. Catalyzes the phosphorolysis of single-stranded polyribonucleotides processively in the 3'- to 5'-direction.</text>
</comment>
<comment type="catalytic activity">
    <reaction evidence="1">
        <text>RNA(n+1) + phosphate = RNA(n) + a ribonucleoside 5'-diphosphate</text>
        <dbReference type="Rhea" id="RHEA:22096"/>
        <dbReference type="Rhea" id="RHEA-COMP:14527"/>
        <dbReference type="Rhea" id="RHEA-COMP:17342"/>
        <dbReference type="ChEBI" id="CHEBI:43474"/>
        <dbReference type="ChEBI" id="CHEBI:57930"/>
        <dbReference type="ChEBI" id="CHEBI:140395"/>
        <dbReference type="EC" id="2.7.7.8"/>
    </reaction>
</comment>
<comment type="cofactor">
    <cofactor evidence="1">
        <name>Mg(2+)</name>
        <dbReference type="ChEBI" id="CHEBI:18420"/>
    </cofactor>
</comment>
<comment type="subcellular location">
    <subcellularLocation>
        <location evidence="1">Cytoplasm</location>
    </subcellularLocation>
</comment>
<comment type="similarity">
    <text evidence="1">Belongs to the polyribonucleotide nucleotidyltransferase family.</text>
</comment>
<reference key="1">
    <citation type="journal article" date="2010" name="Environ. Microbiol.">
        <title>The genome of Syntrophomonas wolfei: new insights into syntrophic metabolism and biohydrogen production.</title>
        <authorList>
            <person name="Sieber J.R."/>
            <person name="Sims D.R."/>
            <person name="Han C."/>
            <person name="Kim E."/>
            <person name="Lykidis A."/>
            <person name="Lapidus A.L."/>
            <person name="McDonnald E."/>
            <person name="Rohlin L."/>
            <person name="Culley D.E."/>
            <person name="Gunsalus R."/>
            <person name="McInerney M.J."/>
        </authorList>
    </citation>
    <scope>NUCLEOTIDE SEQUENCE [LARGE SCALE GENOMIC DNA]</scope>
    <source>
        <strain>DSM 2245B / Goettingen</strain>
    </source>
</reference>
<proteinExistence type="inferred from homology"/>
<dbReference type="EC" id="2.7.7.8" evidence="1"/>
<dbReference type="EMBL" id="CP000448">
    <property type="protein sequence ID" value="ABI68222.1"/>
    <property type="molecule type" value="Genomic_DNA"/>
</dbReference>
<dbReference type="SMR" id="Q0AYI2"/>
<dbReference type="STRING" id="335541.Swol_0906"/>
<dbReference type="KEGG" id="swo:Swol_0906"/>
<dbReference type="eggNOG" id="COG1185">
    <property type="taxonomic scope" value="Bacteria"/>
</dbReference>
<dbReference type="HOGENOM" id="CLU_004217_2_2_9"/>
<dbReference type="OrthoDB" id="9804305at2"/>
<dbReference type="Proteomes" id="UP000001968">
    <property type="component" value="Chromosome"/>
</dbReference>
<dbReference type="GO" id="GO:0005829">
    <property type="term" value="C:cytosol"/>
    <property type="evidence" value="ECO:0007669"/>
    <property type="project" value="TreeGrafter"/>
</dbReference>
<dbReference type="GO" id="GO:0000175">
    <property type="term" value="F:3'-5'-RNA exonuclease activity"/>
    <property type="evidence" value="ECO:0007669"/>
    <property type="project" value="TreeGrafter"/>
</dbReference>
<dbReference type="GO" id="GO:0000287">
    <property type="term" value="F:magnesium ion binding"/>
    <property type="evidence" value="ECO:0007669"/>
    <property type="project" value="UniProtKB-UniRule"/>
</dbReference>
<dbReference type="GO" id="GO:0004654">
    <property type="term" value="F:polyribonucleotide nucleotidyltransferase activity"/>
    <property type="evidence" value="ECO:0007669"/>
    <property type="project" value="UniProtKB-UniRule"/>
</dbReference>
<dbReference type="GO" id="GO:0003723">
    <property type="term" value="F:RNA binding"/>
    <property type="evidence" value="ECO:0007669"/>
    <property type="project" value="UniProtKB-UniRule"/>
</dbReference>
<dbReference type="GO" id="GO:0006402">
    <property type="term" value="P:mRNA catabolic process"/>
    <property type="evidence" value="ECO:0007669"/>
    <property type="project" value="UniProtKB-UniRule"/>
</dbReference>
<dbReference type="GO" id="GO:0006396">
    <property type="term" value="P:RNA processing"/>
    <property type="evidence" value="ECO:0007669"/>
    <property type="project" value="InterPro"/>
</dbReference>
<dbReference type="CDD" id="cd02393">
    <property type="entry name" value="KH-I_PNPase"/>
    <property type="match status" value="1"/>
</dbReference>
<dbReference type="CDD" id="cd11363">
    <property type="entry name" value="RNase_PH_PNPase_1"/>
    <property type="match status" value="1"/>
</dbReference>
<dbReference type="CDD" id="cd11364">
    <property type="entry name" value="RNase_PH_PNPase_2"/>
    <property type="match status" value="1"/>
</dbReference>
<dbReference type="CDD" id="cd04472">
    <property type="entry name" value="S1_PNPase"/>
    <property type="match status" value="1"/>
</dbReference>
<dbReference type="FunFam" id="2.40.50.140:FF:000023">
    <property type="entry name" value="Polyribonucleotide nucleotidyltransferase"/>
    <property type="match status" value="1"/>
</dbReference>
<dbReference type="FunFam" id="3.30.1370.10:FF:000001">
    <property type="entry name" value="Polyribonucleotide nucleotidyltransferase"/>
    <property type="match status" value="1"/>
</dbReference>
<dbReference type="FunFam" id="3.30.230.70:FF:000001">
    <property type="entry name" value="Polyribonucleotide nucleotidyltransferase"/>
    <property type="match status" value="1"/>
</dbReference>
<dbReference type="FunFam" id="3.30.230.70:FF:000002">
    <property type="entry name" value="Polyribonucleotide nucleotidyltransferase"/>
    <property type="match status" value="1"/>
</dbReference>
<dbReference type="Gene3D" id="3.30.230.70">
    <property type="entry name" value="GHMP Kinase, N-terminal domain"/>
    <property type="match status" value="2"/>
</dbReference>
<dbReference type="Gene3D" id="3.30.1370.10">
    <property type="entry name" value="K Homology domain, type 1"/>
    <property type="match status" value="1"/>
</dbReference>
<dbReference type="Gene3D" id="2.40.50.140">
    <property type="entry name" value="Nucleic acid-binding proteins"/>
    <property type="match status" value="1"/>
</dbReference>
<dbReference type="HAMAP" id="MF_01595">
    <property type="entry name" value="PNPase"/>
    <property type="match status" value="1"/>
</dbReference>
<dbReference type="InterPro" id="IPR001247">
    <property type="entry name" value="ExoRNase_PH_dom1"/>
</dbReference>
<dbReference type="InterPro" id="IPR015847">
    <property type="entry name" value="ExoRNase_PH_dom2"/>
</dbReference>
<dbReference type="InterPro" id="IPR036345">
    <property type="entry name" value="ExoRNase_PH_dom2_sf"/>
</dbReference>
<dbReference type="InterPro" id="IPR004087">
    <property type="entry name" value="KH_dom"/>
</dbReference>
<dbReference type="InterPro" id="IPR004088">
    <property type="entry name" value="KH_dom_type_1"/>
</dbReference>
<dbReference type="InterPro" id="IPR036612">
    <property type="entry name" value="KH_dom_type_1_sf"/>
</dbReference>
<dbReference type="InterPro" id="IPR012340">
    <property type="entry name" value="NA-bd_OB-fold"/>
</dbReference>
<dbReference type="InterPro" id="IPR012162">
    <property type="entry name" value="PNPase"/>
</dbReference>
<dbReference type="InterPro" id="IPR027408">
    <property type="entry name" value="PNPase/RNase_PH_dom_sf"/>
</dbReference>
<dbReference type="InterPro" id="IPR015848">
    <property type="entry name" value="PNPase_PH_RNA-bd_bac/org-type"/>
</dbReference>
<dbReference type="InterPro" id="IPR020568">
    <property type="entry name" value="Ribosomal_Su5_D2-typ_SF"/>
</dbReference>
<dbReference type="InterPro" id="IPR003029">
    <property type="entry name" value="S1_domain"/>
</dbReference>
<dbReference type="NCBIfam" id="TIGR03591">
    <property type="entry name" value="polynuc_phos"/>
    <property type="match status" value="1"/>
</dbReference>
<dbReference type="NCBIfam" id="NF008805">
    <property type="entry name" value="PRK11824.1"/>
    <property type="match status" value="1"/>
</dbReference>
<dbReference type="PANTHER" id="PTHR11252">
    <property type="entry name" value="POLYRIBONUCLEOTIDE NUCLEOTIDYLTRANSFERASE"/>
    <property type="match status" value="1"/>
</dbReference>
<dbReference type="PANTHER" id="PTHR11252:SF0">
    <property type="entry name" value="POLYRIBONUCLEOTIDE NUCLEOTIDYLTRANSFERASE 1, MITOCHONDRIAL"/>
    <property type="match status" value="1"/>
</dbReference>
<dbReference type="Pfam" id="PF00013">
    <property type="entry name" value="KH_1"/>
    <property type="match status" value="1"/>
</dbReference>
<dbReference type="Pfam" id="PF03726">
    <property type="entry name" value="PNPase"/>
    <property type="match status" value="1"/>
</dbReference>
<dbReference type="Pfam" id="PF01138">
    <property type="entry name" value="RNase_PH"/>
    <property type="match status" value="2"/>
</dbReference>
<dbReference type="Pfam" id="PF03725">
    <property type="entry name" value="RNase_PH_C"/>
    <property type="match status" value="2"/>
</dbReference>
<dbReference type="Pfam" id="PF00575">
    <property type="entry name" value="S1"/>
    <property type="match status" value="1"/>
</dbReference>
<dbReference type="PIRSF" id="PIRSF005499">
    <property type="entry name" value="PNPase"/>
    <property type="match status" value="1"/>
</dbReference>
<dbReference type="SMART" id="SM00322">
    <property type="entry name" value="KH"/>
    <property type="match status" value="1"/>
</dbReference>
<dbReference type="SMART" id="SM00316">
    <property type="entry name" value="S1"/>
    <property type="match status" value="1"/>
</dbReference>
<dbReference type="SUPFAM" id="SSF54791">
    <property type="entry name" value="Eukaryotic type KH-domain (KH-domain type I)"/>
    <property type="match status" value="1"/>
</dbReference>
<dbReference type="SUPFAM" id="SSF50249">
    <property type="entry name" value="Nucleic acid-binding proteins"/>
    <property type="match status" value="1"/>
</dbReference>
<dbReference type="SUPFAM" id="SSF55666">
    <property type="entry name" value="Ribonuclease PH domain 2-like"/>
    <property type="match status" value="2"/>
</dbReference>
<dbReference type="SUPFAM" id="SSF54211">
    <property type="entry name" value="Ribosomal protein S5 domain 2-like"/>
    <property type="match status" value="2"/>
</dbReference>
<dbReference type="PROSITE" id="PS50084">
    <property type="entry name" value="KH_TYPE_1"/>
    <property type="match status" value="1"/>
</dbReference>
<dbReference type="PROSITE" id="PS50126">
    <property type="entry name" value="S1"/>
    <property type="match status" value="1"/>
</dbReference>